<organism>
    <name type="scientific">Xenopus laevis</name>
    <name type="common">African clawed frog</name>
    <dbReference type="NCBI Taxonomy" id="8355"/>
    <lineage>
        <taxon>Eukaryota</taxon>
        <taxon>Metazoa</taxon>
        <taxon>Chordata</taxon>
        <taxon>Craniata</taxon>
        <taxon>Vertebrata</taxon>
        <taxon>Euteleostomi</taxon>
        <taxon>Amphibia</taxon>
        <taxon>Batrachia</taxon>
        <taxon>Anura</taxon>
        <taxon>Pipoidea</taxon>
        <taxon>Pipidae</taxon>
        <taxon>Xenopodinae</taxon>
        <taxon>Xenopus</taxon>
        <taxon>Xenopus</taxon>
    </lineage>
</organism>
<dbReference type="EC" id="2.3.2.27"/>
<dbReference type="EMBL" id="BC084236">
    <property type="protein sequence ID" value="AAH84236.1"/>
    <property type="status" value="ALT_INIT"/>
    <property type="molecule type" value="mRNA"/>
</dbReference>
<dbReference type="RefSeq" id="NP_001088241.1">
    <property type="nucleotide sequence ID" value="NM_001094772.1"/>
</dbReference>
<dbReference type="BMRB" id="Q5XH39"/>
<dbReference type="DNASU" id="495072"/>
<dbReference type="GeneID" id="495072"/>
<dbReference type="KEGG" id="xla:495072"/>
<dbReference type="AGR" id="Xenbase:XB-GENE-944310"/>
<dbReference type="CTD" id="495072"/>
<dbReference type="Xenbase" id="XB-GENE-944310">
    <property type="gene designation" value="marchf8.L"/>
</dbReference>
<dbReference type="OrthoDB" id="264354at2759"/>
<dbReference type="UniPathway" id="UPA00143"/>
<dbReference type="Proteomes" id="UP000186698">
    <property type="component" value="Chromosome 7L"/>
</dbReference>
<dbReference type="Bgee" id="495072">
    <property type="expression patterns" value="Expressed in gastrula and 19 other cell types or tissues"/>
</dbReference>
<dbReference type="GO" id="GO:0005737">
    <property type="term" value="C:cytoplasm"/>
    <property type="evidence" value="ECO:0000318"/>
    <property type="project" value="GO_Central"/>
</dbReference>
<dbReference type="GO" id="GO:0031901">
    <property type="term" value="C:early endosome membrane"/>
    <property type="evidence" value="ECO:0000318"/>
    <property type="project" value="GO_Central"/>
</dbReference>
<dbReference type="GO" id="GO:0005768">
    <property type="term" value="C:endosome"/>
    <property type="evidence" value="ECO:0000250"/>
    <property type="project" value="UniProtKB"/>
</dbReference>
<dbReference type="GO" id="GO:0031902">
    <property type="term" value="C:late endosome membrane"/>
    <property type="evidence" value="ECO:0000318"/>
    <property type="project" value="GO_Central"/>
</dbReference>
<dbReference type="GO" id="GO:0005765">
    <property type="term" value="C:lysosomal membrane"/>
    <property type="evidence" value="ECO:0007669"/>
    <property type="project" value="UniProtKB-SubCell"/>
</dbReference>
<dbReference type="GO" id="GO:0005764">
    <property type="term" value="C:lysosome"/>
    <property type="evidence" value="ECO:0000250"/>
    <property type="project" value="UniProtKB"/>
</dbReference>
<dbReference type="GO" id="GO:0042287">
    <property type="term" value="F:MHC protein binding"/>
    <property type="evidence" value="ECO:0000318"/>
    <property type="project" value="GO_Central"/>
</dbReference>
<dbReference type="GO" id="GO:0061630">
    <property type="term" value="F:ubiquitin protein ligase activity"/>
    <property type="evidence" value="ECO:0000318"/>
    <property type="project" value="GO_Central"/>
</dbReference>
<dbReference type="GO" id="GO:0004842">
    <property type="term" value="F:ubiquitin-protein transferase activity"/>
    <property type="evidence" value="ECO:0000250"/>
    <property type="project" value="UniProtKB"/>
</dbReference>
<dbReference type="GO" id="GO:0008270">
    <property type="term" value="F:zinc ion binding"/>
    <property type="evidence" value="ECO:0007669"/>
    <property type="project" value="UniProtKB-KW"/>
</dbReference>
<dbReference type="GO" id="GO:0002495">
    <property type="term" value="P:antigen processing and presentation of peptide antigen via MHC class II"/>
    <property type="evidence" value="ECO:0000318"/>
    <property type="project" value="GO_Central"/>
</dbReference>
<dbReference type="GO" id="GO:0006955">
    <property type="term" value="P:immune response"/>
    <property type="evidence" value="ECO:0000318"/>
    <property type="project" value="GO_Central"/>
</dbReference>
<dbReference type="GO" id="GO:0000209">
    <property type="term" value="P:protein polyubiquitination"/>
    <property type="evidence" value="ECO:0000318"/>
    <property type="project" value="GO_Central"/>
</dbReference>
<dbReference type="CDD" id="cd16807">
    <property type="entry name" value="RING_CH-C4HC3_MARCH8"/>
    <property type="match status" value="1"/>
</dbReference>
<dbReference type="FunFam" id="3.30.40.10:FF:000043">
    <property type="entry name" value="Putative e3 ubiquitin-protein ligase march8"/>
    <property type="match status" value="1"/>
</dbReference>
<dbReference type="Gene3D" id="3.30.40.10">
    <property type="entry name" value="Zinc/RING finger domain, C3HC4 (zinc finger)"/>
    <property type="match status" value="1"/>
</dbReference>
<dbReference type="InterPro" id="IPR001841">
    <property type="entry name" value="Znf_RING"/>
</dbReference>
<dbReference type="InterPro" id="IPR011016">
    <property type="entry name" value="Znf_RING-CH"/>
</dbReference>
<dbReference type="InterPro" id="IPR013083">
    <property type="entry name" value="Znf_RING/FYVE/PHD"/>
</dbReference>
<dbReference type="PANTHER" id="PTHR45981">
    <property type="entry name" value="LD02310P"/>
    <property type="match status" value="1"/>
</dbReference>
<dbReference type="Pfam" id="PF12906">
    <property type="entry name" value="RINGv"/>
    <property type="match status" value="1"/>
</dbReference>
<dbReference type="SMART" id="SM00744">
    <property type="entry name" value="RINGv"/>
    <property type="match status" value="1"/>
</dbReference>
<dbReference type="SUPFAM" id="SSF57850">
    <property type="entry name" value="RING/U-box"/>
    <property type="match status" value="1"/>
</dbReference>
<dbReference type="PROSITE" id="PS51292">
    <property type="entry name" value="ZF_RING_CH"/>
    <property type="match status" value="1"/>
</dbReference>
<evidence type="ECO:0000250" key="1">
    <source>
        <dbReference type="UniProtKB" id="Q5T0T0"/>
    </source>
</evidence>
<evidence type="ECO:0000255" key="2"/>
<evidence type="ECO:0000255" key="3">
    <source>
        <dbReference type="PROSITE-ProRule" id="PRU00623"/>
    </source>
</evidence>
<evidence type="ECO:0000256" key="4">
    <source>
        <dbReference type="SAM" id="MobiDB-lite"/>
    </source>
</evidence>
<evidence type="ECO:0000305" key="5"/>
<protein>
    <recommendedName>
        <fullName>E3 ubiquitin-protein ligase MARCHF8</fullName>
        <ecNumber>2.3.2.27</ecNumber>
    </recommendedName>
    <alternativeName>
        <fullName>Membrane-associated RING finger protein 8</fullName>
    </alternativeName>
    <alternativeName>
        <fullName>Membrane-associated RING-CH protein VIII</fullName>
        <shortName>MARCH-VIII</shortName>
    </alternativeName>
    <alternativeName>
        <fullName evidence="5">RING-type E3 ubiquitin transferase MARCHF8</fullName>
    </alternativeName>
</protein>
<keyword id="KW-0968">Cytoplasmic vesicle</keyword>
<keyword id="KW-0967">Endosome</keyword>
<keyword id="KW-0391">Immunity</keyword>
<keyword id="KW-0458">Lysosome</keyword>
<keyword id="KW-0472">Membrane</keyword>
<keyword id="KW-0479">Metal-binding</keyword>
<keyword id="KW-1185">Reference proteome</keyword>
<keyword id="KW-0808">Transferase</keyword>
<keyword id="KW-0812">Transmembrane</keyword>
<keyword id="KW-1133">Transmembrane helix</keyword>
<keyword id="KW-0833">Ubl conjugation pathway</keyword>
<keyword id="KW-0862">Zinc</keyword>
<keyword id="KW-0863">Zinc-finger</keyword>
<comment type="function">
    <text evidence="1">E3 ubiquitin-protein ligase that mediates ubiquitination of cd86 and MHC class II proteins, such as hla-dr alpha and beta, and promotes their subsequent endocytosis and sorting to lysosomes via multivesicular bodies.</text>
</comment>
<comment type="catalytic activity">
    <reaction>
        <text>S-ubiquitinyl-[E2 ubiquitin-conjugating enzyme]-L-cysteine + [acceptor protein]-L-lysine = [E2 ubiquitin-conjugating enzyme]-L-cysteine + N(6)-ubiquitinyl-[acceptor protein]-L-lysine.</text>
        <dbReference type="EC" id="2.3.2.27"/>
    </reaction>
</comment>
<comment type="pathway">
    <text>Protein modification; protein ubiquitination.</text>
</comment>
<comment type="subcellular location">
    <subcellularLocation>
        <location evidence="1">Cytoplasmic vesicle membrane</location>
        <topology evidence="2">Multi-pass membrane protein</topology>
    </subcellularLocation>
    <subcellularLocation>
        <location evidence="1">Lysosome membrane</location>
        <topology evidence="2">Multi-pass membrane protein</topology>
    </subcellularLocation>
    <subcellularLocation>
        <location evidence="1">Early endosome membrane</location>
        <topology evidence="2">Multi-pass membrane protein</topology>
    </subcellularLocation>
</comment>
<comment type="domain">
    <text evidence="3">The RING-CH-type zinc finger domain is required for E3 ligase activity.</text>
</comment>
<comment type="sequence caution" evidence="5">
    <conflict type="erroneous initiation">
        <sequence resource="EMBL-CDS" id="AAH84236"/>
    </conflict>
    <text>Truncated N-terminus.</text>
</comment>
<gene>
    <name type="primary">marchf8</name>
    <name type="synonym">march8</name>
</gene>
<reference key="1">
    <citation type="submission" date="2004-10" db="EMBL/GenBank/DDBJ databases">
        <authorList>
            <consortium name="NIH - Xenopus Gene Collection (XGC) project"/>
        </authorList>
    </citation>
    <scope>NUCLEOTIDE SEQUENCE [LARGE SCALE MRNA]</scope>
    <source>
        <tissue>Embryo</tissue>
    </source>
</reference>
<sequence>MHSCWNMKLQNEKTLGHSVSRSSNISKAGSPTSVSAPSRFPRTSVTPSSQDICRICHCEGDDESPLITPCHCTGSLHFVHQACLQQWIKSSDTRCCELCKFEFIMETKLKPLRKWEKLQMTASERRKIMCSVTFHVIAITCVVWSLYVLIDRTAEEIRMGQNNGILEWPFWTKLVVVAIGFTGGLLFMYVQCKVYVQLWKRLKAYNRVIYVQNCPETCKKKIFEKSVIIEPNLESKEALGIHHSDTNSSYYTEPEDCGAAILQV</sequence>
<accession>Q5XH39</accession>
<name>MARH8_XENLA</name>
<feature type="chain" id="PRO_0000274372" description="E3 ubiquitin-protein ligase MARCHF8">
    <location>
        <begin position="1"/>
        <end position="264"/>
    </location>
</feature>
<feature type="transmembrane region" description="Helical" evidence="2">
    <location>
        <begin position="130"/>
        <end position="150"/>
    </location>
</feature>
<feature type="transmembrane region" description="Helical" evidence="2">
    <location>
        <begin position="170"/>
        <end position="190"/>
    </location>
</feature>
<feature type="zinc finger region" description="RING-CH-type" evidence="3">
    <location>
        <begin position="45"/>
        <end position="106"/>
    </location>
</feature>
<feature type="region of interest" description="Disordered" evidence="4">
    <location>
        <begin position="15"/>
        <end position="47"/>
    </location>
</feature>
<feature type="compositionally biased region" description="Polar residues" evidence="4">
    <location>
        <begin position="16"/>
        <end position="47"/>
    </location>
</feature>
<feature type="binding site" evidence="3">
    <location>
        <position position="53"/>
    </location>
    <ligand>
        <name>Zn(2+)</name>
        <dbReference type="ChEBI" id="CHEBI:29105"/>
        <label>1</label>
    </ligand>
</feature>
<feature type="binding site" evidence="3">
    <location>
        <position position="56"/>
    </location>
    <ligand>
        <name>Zn(2+)</name>
        <dbReference type="ChEBI" id="CHEBI:29105"/>
        <label>1</label>
    </ligand>
</feature>
<feature type="binding site" evidence="3">
    <location>
        <position position="70"/>
    </location>
    <ligand>
        <name>Zn(2+)</name>
        <dbReference type="ChEBI" id="CHEBI:29105"/>
        <label>2</label>
    </ligand>
</feature>
<feature type="binding site" evidence="3">
    <location>
        <position position="72"/>
    </location>
    <ligand>
        <name>Zn(2+)</name>
        <dbReference type="ChEBI" id="CHEBI:29105"/>
        <label>2</label>
    </ligand>
</feature>
<feature type="binding site" evidence="3">
    <location>
        <position position="80"/>
    </location>
    <ligand>
        <name>Zn(2+)</name>
        <dbReference type="ChEBI" id="CHEBI:29105"/>
        <label>1</label>
    </ligand>
</feature>
<feature type="binding site" evidence="3">
    <location>
        <position position="83"/>
    </location>
    <ligand>
        <name>Zn(2+)</name>
        <dbReference type="ChEBI" id="CHEBI:29105"/>
        <label>1</label>
    </ligand>
</feature>
<feature type="binding site" evidence="3">
    <location>
        <position position="96"/>
    </location>
    <ligand>
        <name>Zn(2+)</name>
        <dbReference type="ChEBI" id="CHEBI:29105"/>
        <label>2</label>
    </ligand>
</feature>
<feature type="binding site" evidence="3">
    <location>
        <position position="99"/>
    </location>
    <ligand>
        <name>Zn(2+)</name>
        <dbReference type="ChEBI" id="CHEBI:29105"/>
        <label>2</label>
    </ligand>
</feature>
<proteinExistence type="evidence at transcript level"/>